<protein>
    <recommendedName>
        <fullName evidence="1">Holliday junction branch migration complex subunit RuvA</fullName>
    </recommendedName>
</protein>
<organism>
    <name type="scientific">Rhizobium johnstonii (strain DSM 114642 / LMG 32736 / 3841)</name>
    <name type="common">Rhizobium leguminosarum bv. viciae</name>
    <dbReference type="NCBI Taxonomy" id="216596"/>
    <lineage>
        <taxon>Bacteria</taxon>
        <taxon>Pseudomonadati</taxon>
        <taxon>Pseudomonadota</taxon>
        <taxon>Alphaproteobacteria</taxon>
        <taxon>Hyphomicrobiales</taxon>
        <taxon>Rhizobiaceae</taxon>
        <taxon>Rhizobium/Agrobacterium group</taxon>
        <taxon>Rhizobium</taxon>
        <taxon>Rhizobium johnstonii</taxon>
    </lineage>
</organism>
<proteinExistence type="inferred from homology"/>
<sequence length="204" mass="21351">MIGKLKGTIDEIGEDYVLVDVHGVCYVAHCSARTLSKLGSTGEACVLFIETYVREDQLKLFGFMTALEREWFNLLQSVQGVGAKVALAVLSTLPPGELANAIALQDRTAVSRAPGVGPKVAMRLVTELKNRAPAFAGEAINIGLKQELGEGVAAAPVADAVSALTNLGYSRDQAANAIAAAMKTAGEGADSAKLIRLGLKELAR</sequence>
<dbReference type="EMBL" id="AM236080">
    <property type="protein sequence ID" value="CAK09479.1"/>
    <property type="molecule type" value="Genomic_DNA"/>
</dbReference>
<dbReference type="RefSeq" id="WP_011653417.1">
    <property type="nucleotide sequence ID" value="NC_008380.1"/>
</dbReference>
<dbReference type="SMR" id="Q1MC53"/>
<dbReference type="EnsemblBacteria" id="CAK09479">
    <property type="protein sequence ID" value="CAK09479"/>
    <property type="gene ID" value="RL3989"/>
</dbReference>
<dbReference type="KEGG" id="rle:RL3989"/>
<dbReference type="eggNOG" id="COG0632">
    <property type="taxonomic scope" value="Bacteria"/>
</dbReference>
<dbReference type="HOGENOM" id="CLU_087936_3_0_5"/>
<dbReference type="Proteomes" id="UP000006575">
    <property type="component" value="Chromosome"/>
</dbReference>
<dbReference type="GO" id="GO:0005737">
    <property type="term" value="C:cytoplasm"/>
    <property type="evidence" value="ECO:0007669"/>
    <property type="project" value="UniProtKB-SubCell"/>
</dbReference>
<dbReference type="GO" id="GO:0009379">
    <property type="term" value="C:Holliday junction helicase complex"/>
    <property type="evidence" value="ECO:0007669"/>
    <property type="project" value="InterPro"/>
</dbReference>
<dbReference type="GO" id="GO:0048476">
    <property type="term" value="C:Holliday junction resolvase complex"/>
    <property type="evidence" value="ECO:0007669"/>
    <property type="project" value="UniProtKB-UniRule"/>
</dbReference>
<dbReference type="GO" id="GO:0005524">
    <property type="term" value="F:ATP binding"/>
    <property type="evidence" value="ECO:0007669"/>
    <property type="project" value="InterPro"/>
</dbReference>
<dbReference type="GO" id="GO:0000400">
    <property type="term" value="F:four-way junction DNA binding"/>
    <property type="evidence" value="ECO:0007669"/>
    <property type="project" value="UniProtKB-UniRule"/>
</dbReference>
<dbReference type="GO" id="GO:0009378">
    <property type="term" value="F:four-way junction helicase activity"/>
    <property type="evidence" value="ECO:0007669"/>
    <property type="project" value="InterPro"/>
</dbReference>
<dbReference type="GO" id="GO:0006310">
    <property type="term" value="P:DNA recombination"/>
    <property type="evidence" value="ECO:0007669"/>
    <property type="project" value="UniProtKB-UniRule"/>
</dbReference>
<dbReference type="GO" id="GO:0006281">
    <property type="term" value="P:DNA repair"/>
    <property type="evidence" value="ECO:0007669"/>
    <property type="project" value="UniProtKB-UniRule"/>
</dbReference>
<dbReference type="Gene3D" id="1.10.150.20">
    <property type="entry name" value="5' to 3' exonuclease, C-terminal subdomain"/>
    <property type="match status" value="1"/>
</dbReference>
<dbReference type="Gene3D" id="1.10.8.10">
    <property type="entry name" value="DNA helicase RuvA subunit, C-terminal domain"/>
    <property type="match status" value="1"/>
</dbReference>
<dbReference type="Gene3D" id="2.40.50.140">
    <property type="entry name" value="Nucleic acid-binding proteins"/>
    <property type="match status" value="1"/>
</dbReference>
<dbReference type="HAMAP" id="MF_00031">
    <property type="entry name" value="DNA_HJ_migration_RuvA"/>
    <property type="match status" value="1"/>
</dbReference>
<dbReference type="InterPro" id="IPR013849">
    <property type="entry name" value="DNA_helicase_Holl-junc_RuvA_I"/>
</dbReference>
<dbReference type="InterPro" id="IPR012340">
    <property type="entry name" value="NA-bd_OB-fold"/>
</dbReference>
<dbReference type="InterPro" id="IPR000085">
    <property type="entry name" value="RuvA"/>
</dbReference>
<dbReference type="InterPro" id="IPR010994">
    <property type="entry name" value="RuvA_2-like"/>
</dbReference>
<dbReference type="InterPro" id="IPR011114">
    <property type="entry name" value="RuvA_C"/>
</dbReference>
<dbReference type="InterPro" id="IPR036267">
    <property type="entry name" value="RuvA_C_sf"/>
</dbReference>
<dbReference type="NCBIfam" id="TIGR00084">
    <property type="entry name" value="ruvA"/>
    <property type="match status" value="1"/>
</dbReference>
<dbReference type="Pfam" id="PF14520">
    <property type="entry name" value="HHH_5"/>
    <property type="match status" value="1"/>
</dbReference>
<dbReference type="Pfam" id="PF07499">
    <property type="entry name" value="RuvA_C"/>
    <property type="match status" value="1"/>
</dbReference>
<dbReference type="Pfam" id="PF01330">
    <property type="entry name" value="RuvA_N"/>
    <property type="match status" value="1"/>
</dbReference>
<dbReference type="SUPFAM" id="SSF46929">
    <property type="entry name" value="DNA helicase RuvA subunit, C-terminal domain"/>
    <property type="match status" value="1"/>
</dbReference>
<dbReference type="SUPFAM" id="SSF50249">
    <property type="entry name" value="Nucleic acid-binding proteins"/>
    <property type="match status" value="1"/>
</dbReference>
<dbReference type="SUPFAM" id="SSF47781">
    <property type="entry name" value="RuvA domain 2-like"/>
    <property type="match status" value="1"/>
</dbReference>
<reference key="1">
    <citation type="journal article" date="2006" name="Genome Biol.">
        <title>The genome of Rhizobium leguminosarum has recognizable core and accessory components.</title>
        <authorList>
            <person name="Young J.P.W."/>
            <person name="Crossman L.C."/>
            <person name="Johnston A.W.B."/>
            <person name="Thomson N.R."/>
            <person name="Ghazoui Z.F."/>
            <person name="Hull K.H."/>
            <person name="Wexler M."/>
            <person name="Curson A.R.J."/>
            <person name="Todd J.D."/>
            <person name="Poole P.S."/>
            <person name="Mauchline T.H."/>
            <person name="East A.K."/>
            <person name="Quail M.A."/>
            <person name="Churcher C."/>
            <person name="Arrowsmith C."/>
            <person name="Cherevach I."/>
            <person name="Chillingworth T."/>
            <person name="Clarke K."/>
            <person name="Cronin A."/>
            <person name="Davis P."/>
            <person name="Fraser A."/>
            <person name="Hance Z."/>
            <person name="Hauser H."/>
            <person name="Jagels K."/>
            <person name="Moule S."/>
            <person name="Mungall K."/>
            <person name="Norbertczak H."/>
            <person name="Rabbinowitsch E."/>
            <person name="Sanders M."/>
            <person name="Simmonds M."/>
            <person name="Whitehead S."/>
            <person name="Parkhill J."/>
        </authorList>
    </citation>
    <scope>NUCLEOTIDE SEQUENCE [LARGE SCALE GENOMIC DNA]</scope>
    <source>
        <strain>DSM 114642 / LMG 32736 / 3841</strain>
    </source>
</reference>
<feature type="chain" id="PRO_1000002526" description="Holliday junction branch migration complex subunit RuvA">
    <location>
        <begin position="1"/>
        <end position="204"/>
    </location>
</feature>
<feature type="region of interest" description="Domain I" evidence="1">
    <location>
        <begin position="1"/>
        <end position="64"/>
    </location>
</feature>
<feature type="region of interest" description="Domain II" evidence="1">
    <location>
        <begin position="65"/>
        <end position="143"/>
    </location>
</feature>
<feature type="region of interest" description="Flexible linker" evidence="1">
    <location>
        <begin position="144"/>
        <end position="151"/>
    </location>
</feature>
<feature type="region of interest" description="Domain III" evidence="1">
    <location>
        <begin position="152"/>
        <end position="204"/>
    </location>
</feature>
<keyword id="KW-0963">Cytoplasm</keyword>
<keyword id="KW-0227">DNA damage</keyword>
<keyword id="KW-0233">DNA recombination</keyword>
<keyword id="KW-0234">DNA repair</keyword>
<keyword id="KW-0238">DNA-binding</keyword>
<gene>
    <name evidence="1" type="primary">ruvA</name>
    <name type="ordered locus">RL3989</name>
</gene>
<comment type="function">
    <text evidence="1">The RuvA-RuvB-RuvC complex processes Holliday junction (HJ) DNA during genetic recombination and DNA repair, while the RuvA-RuvB complex plays an important role in the rescue of blocked DNA replication forks via replication fork reversal (RFR). RuvA specifically binds to HJ cruciform DNA, conferring on it an open structure. The RuvB hexamer acts as an ATP-dependent pump, pulling dsDNA into and through the RuvAB complex. HJ branch migration allows RuvC to scan DNA until it finds its consensus sequence, where it cleaves and resolves the cruciform DNA.</text>
</comment>
<comment type="subunit">
    <text evidence="1">Homotetramer. Forms an RuvA(8)-RuvB(12)-Holliday junction (HJ) complex. HJ DNA is sandwiched between 2 RuvA tetramers; dsDNA enters through RuvA and exits via RuvB. An RuvB hexamer assembles on each DNA strand where it exits the tetramer. Each RuvB hexamer is contacted by two RuvA subunits (via domain III) on 2 adjacent RuvB subunits; this complex drives branch migration. In the full resolvosome a probable DNA-RuvA(4)-RuvB(12)-RuvC(2) complex forms which resolves the HJ.</text>
</comment>
<comment type="subcellular location">
    <subcellularLocation>
        <location evidence="1">Cytoplasm</location>
    </subcellularLocation>
</comment>
<comment type="domain">
    <text evidence="1">Has three domains with a flexible linker between the domains II and III and assumes an 'L' shape. Domain III is highly mobile and contacts RuvB.</text>
</comment>
<comment type="similarity">
    <text evidence="1">Belongs to the RuvA family.</text>
</comment>
<name>RUVA_RHIJ3</name>
<evidence type="ECO:0000255" key="1">
    <source>
        <dbReference type="HAMAP-Rule" id="MF_00031"/>
    </source>
</evidence>
<accession>Q1MC53</accession>